<protein>
    <recommendedName>
        <fullName>Uncharacterized protein HI_1489</fullName>
    </recommendedName>
</protein>
<feature type="chain" id="PRO_0000078072" description="Uncharacterized protein HI_1489">
    <location>
        <begin position="1"/>
        <end position="184"/>
    </location>
</feature>
<gene>
    <name type="ordered locus">HI_1489</name>
</gene>
<reference key="1">
    <citation type="journal article" date="1995" name="Science">
        <title>Whole-genome random sequencing and assembly of Haemophilus influenzae Rd.</title>
        <authorList>
            <person name="Fleischmann R.D."/>
            <person name="Adams M.D."/>
            <person name="White O."/>
            <person name="Clayton R.A."/>
            <person name="Kirkness E.F."/>
            <person name="Kerlavage A.R."/>
            <person name="Bult C.J."/>
            <person name="Tomb J.-F."/>
            <person name="Dougherty B.A."/>
            <person name="Merrick J.M."/>
            <person name="McKenney K."/>
            <person name="Sutton G.G."/>
            <person name="FitzHugh W."/>
            <person name="Fields C.A."/>
            <person name="Gocayne J.D."/>
            <person name="Scott J.D."/>
            <person name="Shirley R."/>
            <person name="Liu L.-I."/>
            <person name="Glodek A."/>
            <person name="Kelley J.M."/>
            <person name="Weidman J.F."/>
            <person name="Phillips C.A."/>
            <person name="Spriggs T."/>
            <person name="Hedblom E."/>
            <person name="Cotton M.D."/>
            <person name="Utterback T.R."/>
            <person name="Hanna M.C."/>
            <person name="Nguyen D.T."/>
            <person name="Saudek D.M."/>
            <person name="Brandon R.C."/>
            <person name="Fine L.D."/>
            <person name="Fritchman J.L."/>
            <person name="Fuhrmann J.L."/>
            <person name="Geoghagen N.S.M."/>
            <person name="Gnehm C.L."/>
            <person name="McDonald L.A."/>
            <person name="Small K.V."/>
            <person name="Fraser C.M."/>
            <person name="Smith H.O."/>
            <person name="Venter J.C."/>
        </authorList>
    </citation>
    <scope>NUCLEOTIDE SEQUENCE [LARGE SCALE GENOMIC DNA]</scope>
    <source>
        <strain>ATCC 51907 / DSM 11121 / KW20 / Rd</strain>
    </source>
</reference>
<keyword id="KW-1185">Reference proteome</keyword>
<sequence length="184" mass="20782">MKLCRCPICHSDIHLEALIEDDAGRELLGKISQLTHGCAQPMVGYLGLFKPAKSNLNNARALKILSEVLDLYPCSLLLAQALSETVASLRKKRQQALQTGQKIEPLTNHNYLKSVYETQKPHFAVIRSGKNQSETVKAQQAEDKKVQDAILYVERFVQLGQEEFVKNSPEYQIWLNHKAQKQAL</sequence>
<accession>P44215</accession>
<organism>
    <name type="scientific">Haemophilus influenzae (strain ATCC 51907 / DSM 11121 / KW20 / Rd)</name>
    <dbReference type="NCBI Taxonomy" id="71421"/>
    <lineage>
        <taxon>Bacteria</taxon>
        <taxon>Pseudomonadati</taxon>
        <taxon>Pseudomonadota</taxon>
        <taxon>Gammaproteobacteria</taxon>
        <taxon>Pasteurellales</taxon>
        <taxon>Pasteurellaceae</taxon>
        <taxon>Haemophilus</taxon>
    </lineage>
</organism>
<name>Y1489_HAEIN</name>
<proteinExistence type="predicted"/>
<dbReference type="EMBL" id="L42023">
    <property type="protein sequence ID" value="AAC23143.1"/>
    <property type="molecule type" value="Genomic_DNA"/>
</dbReference>
<dbReference type="PIR" id="I64031">
    <property type="entry name" value="I64031"/>
</dbReference>
<dbReference type="RefSeq" id="NP_439639.1">
    <property type="nucleotide sequence ID" value="NC_000907.1"/>
</dbReference>
<dbReference type="STRING" id="71421.HI_1489"/>
<dbReference type="EnsemblBacteria" id="AAC23143">
    <property type="protein sequence ID" value="AAC23143"/>
    <property type="gene ID" value="HI_1489"/>
</dbReference>
<dbReference type="KEGG" id="hin:HI_1489"/>
<dbReference type="PATRIC" id="fig|71421.8.peg.1557"/>
<dbReference type="eggNOG" id="ENOG5032UKF">
    <property type="taxonomic scope" value="Bacteria"/>
</dbReference>
<dbReference type="HOGENOM" id="CLU_125423_0_0_6"/>
<dbReference type="OrthoDB" id="6872885at2"/>
<dbReference type="BioCyc" id="HINF71421:G1GJ1-1513-MONOMER"/>
<dbReference type="Proteomes" id="UP000000579">
    <property type="component" value="Chromosome"/>
</dbReference>